<evidence type="ECO:0000255" key="1">
    <source>
        <dbReference type="PROSITE-ProRule" id="PRU00541"/>
    </source>
</evidence>
<evidence type="ECO:0000255" key="2">
    <source>
        <dbReference type="PROSITE-ProRule" id="PRU00542"/>
    </source>
</evidence>
<evidence type="ECO:0000269" key="3">
    <source>
    </source>
</evidence>
<evidence type="ECO:0000269" key="4">
    <source>
    </source>
</evidence>
<evidence type="ECO:0000269" key="5">
    <source>
    </source>
</evidence>
<evidence type="ECO:0000269" key="6">
    <source>
    </source>
</evidence>
<evidence type="ECO:0000269" key="7">
    <source>
    </source>
</evidence>
<evidence type="ECO:0000269" key="8">
    <source>
    </source>
</evidence>
<evidence type="ECO:0000269" key="9">
    <source>
    </source>
</evidence>
<evidence type="ECO:0000269" key="10">
    <source>
    </source>
</evidence>
<evidence type="ECO:0000303" key="11">
    <source>
    </source>
</evidence>
<evidence type="ECO:0000305" key="12"/>
<evidence type="ECO:0000312" key="13">
    <source>
        <dbReference type="SGD" id="S000002699"/>
    </source>
</evidence>
<dbReference type="EC" id="5.6.2.4" evidence="6 8"/>
<dbReference type="EMBL" id="U51031">
    <property type="protein sequence ID" value="AAB64466.1"/>
    <property type="molecule type" value="Genomic_DNA"/>
</dbReference>
<dbReference type="EMBL" id="BK006938">
    <property type="protein sequence ID" value="DAA12130.1"/>
    <property type="molecule type" value="Genomic_DNA"/>
</dbReference>
<dbReference type="PIR" id="S70120">
    <property type="entry name" value="S70120"/>
</dbReference>
<dbReference type="RefSeq" id="NP_010577.3">
    <property type="nucleotide sequence ID" value="NM_001180599.3"/>
</dbReference>
<dbReference type="SMR" id="Q05549"/>
<dbReference type="BioGRID" id="32343">
    <property type="interactions" value="2121"/>
</dbReference>
<dbReference type="FunCoup" id="Q05549">
    <property type="interactions" value="149"/>
</dbReference>
<dbReference type="IntAct" id="Q05549">
    <property type="interactions" value="3"/>
</dbReference>
<dbReference type="MINT" id="Q05549"/>
<dbReference type="STRING" id="4932.YDR291W"/>
<dbReference type="iPTMnet" id="Q05549"/>
<dbReference type="PaxDb" id="4932-YDR291W"/>
<dbReference type="PeptideAtlas" id="Q05549"/>
<dbReference type="EnsemblFungi" id="YDR291W_mRNA">
    <property type="protein sequence ID" value="YDR291W"/>
    <property type="gene ID" value="YDR291W"/>
</dbReference>
<dbReference type="GeneID" id="851885"/>
<dbReference type="KEGG" id="sce:YDR291W"/>
<dbReference type="AGR" id="SGD:S000002699"/>
<dbReference type="SGD" id="S000002699">
    <property type="gene designation" value="HRQ1"/>
</dbReference>
<dbReference type="VEuPathDB" id="FungiDB:YDR291W"/>
<dbReference type="eggNOG" id="KOG4150">
    <property type="taxonomic scope" value="Eukaryota"/>
</dbReference>
<dbReference type="HOGENOM" id="CLU_000809_1_0_1"/>
<dbReference type="InParanoid" id="Q05549"/>
<dbReference type="OMA" id="GAVHLHQ"/>
<dbReference type="OrthoDB" id="18781at2759"/>
<dbReference type="BioCyc" id="YEAST:G3O-29854-MONOMER"/>
<dbReference type="BRENDA" id="3.6.4.12">
    <property type="organism ID" value="984"/>
</dbReference>
<dbReference type="BioGRID-ORCS" id="851885">
    <property type="hits" value="0 hits in 10 CRISPR screens"/>
</dbReference>
<dbReference type="PRO" id="PR:Q05549"/>
<dbReference type="Proteomes" id="UP000002311">
    <property type="component" value="Chromosome IV"/>
</dbReference>
<dbReference type="RNAct" id="Q05549">
    <property type="molecule type" value="protein"/>
</dbReference>
<dbReference type="GO" id="GO:0005634">
    <property type="term" value="C:nucleus"/>
    <property type="evidence" value="ECO:0007005"/>
    <property type="project" value="SGD"/>
</dbReference>
<dbReference type="GO" id="GO:0043138">
    <property type="term" value="F:3'-5' DNA helicase activity"/>
    <property type="evidence" value="ECO:0000314"/>
    <property type="project" value="SGD"/>
</dbReference>
<dbReference type="GO" id="GO:0005524">
    <property type="term" value="F:ATP binding"/>
    <property type="evidence" value="ECO:0007669"/>
    <property type="project" value="UniProtKB-KW"/>
</dbReference>
<dbReference type="GO" id="GO:0016887">
    <property type="term" value="F:ATP hydrolysis activity"/>
    <property type="evidence" value="ECO:0007669"/>
    <property type="project" value="RHEA"/>
</dbReference>
<dbReference type="GO" id="GO:0008047">
    <property type="term" value="F:enzyme activator activity"/>
    <property type="evidence" value="ECO:0000314"/>
    <property type="project" value="SGD"/>
</dbReference>
<dbReference type="GO" id="GO:0003697">
    <property type="term" value="F:single-stranded DNA binding"/>
    <property type="evidence" value="ECO:0000314"/>
    <property type="project" value="SGD"/>
</dbReference>
<dbReference type="GO" id="GO:0042162">
    <property type="term" value="F:telomeric DNA binding"/>
    <property type="evidence" value="ECO:0000314"/>
    <property type="project" value="SGD"/>
</dbReference>
<dbReference type="GO" id="GO:0042275">
    <property type="term" value="P:error-free postreplication DNA repair"/>
    <property type="evidence" value="ECO:0000315"/>
    <property type="project" value="SGD"/>
</dbReference>
<dbReference type="GO" id="GO:0036297">
    <property type="term" value="P:interstrand cross-link repair"/>
    <property type="evidence" value="ECO:0000314"/>
    <property type="project" value="SGD"/>
</dbReference>
<dbReference type="GO" id="GO:0006289">
    <property type="term" value="P:nucleotide-excision repair"/>
    <property type="evidence" value="ECO:0000316"/>
    <property type="project" value="SGD"/>
</dbReference>
<dbReference type="GO" id="GO:0032204">
    <property type="term" value="P:regulation of telomere maintenance"/>
    <property type="evidence" value="ECO:0000316"/>
    <property type="project" value="SGD"/>
</dbReference>
<dbReference type="GO" id="GO:0032202">
    <property type="term" value="P:telomere assembly"/>
    <property type="evidence" value="ECO:0000315"/>
    <property type="project" value="SGD"/>
</dbReference>
<dbReference type="CDD" id="cd17923">
    <property type="entry name" value="DEXHc_Hrq1-like"/>
    <property type="match status" value="1"/>
</dbReference>
<dbReference type="CDD" id="cd18797">
    <property type="entry name" value="SF2_C_Hrq"/>
    <property type="match status" value="1"/>
</dbReference>
<dbReference type="FunFam" id="3.40.50.300:FF:002773">
    <property type="entry name" value="ATP-dependent helicase HRQ1"/>
    <property type="match status" value="1"/>
</dbReference>
<dbReference type="FunFam" id="3.40.50.300:FF:001137">
    <property type="entry name" value="DEAD/DEAH box helicase"/>
    <property type="match status" value="1"/>
</dbReference>
<dbReference type="Gene3D" id="3.40.50.300">
    <property type="entry name" value="P-loop containing nucleotide triphosphate hydrolases"/>
    <property type="match status" value="2"/>
</dbReference>
<dbReference type="InterPro" id="IPR011545">
    <property type="entry name" value="DEAD/DEAH_box_helicase_dom"/>
</dbReference>
<dbReference type="InterPro" id="IPR014001">
    <property type="entry name" value="Helicase_ATP-bd"/>
</dbReference>
<dbReference type="InterPro" id="IPR001650">
    <property type="entry name" value="Helicase_C-like"/>
</dbReference>
<dbReference type="InterPro" id="IPR055227">
    <property type="entry name" value="HRQ1_WHD"/>
</dbReference>
<dbReference type="InterPro" id="IPR018973">
    <property type="entry name" value="MZB"/>
</dbReference>
<dbReference type="InterPro" id="IPR027417">
    <property type="entry name" value="P-loop_NTPase"/>
</dbReference>
<dbReference type="PANTHER" id="PTHR47957">
    <property type="entry name" value="ATP-DEPENDENT HELICASE HRQ1"/>
    <property type="match status" value="1"/>
</dbReference>
<dbReference type="PANTHER" id="PTHR47957:SF3">
    <property type="entry name" value="ATP-DEPENDENT HELICASE HRQ1"/>
    <property type="match status" value="1"/>
</dbReference>
<dbReference type="Pfam" id="PF00270">
    <property type="entry name" value="DEAD"/>
    <property type="match status" value="1"/>
</dbReference>
<dbReference type="Pfam" id="PF00271">
    <property type="entry name" value="Helicase_C"/>
    <property type="match status" value="1"/>
</dbReference>
<dbReference type="Pfam" id="PF09369">
    <property type="entry name" value="MZB"/>
    <property type="match status" value="1"/>
</dbReference>
<dbReference type="Pfam" id="PF22982">
    <property type="entry name" value="WHD_HRQ1"/>
    <property type="match status" value="1"/>
</dbReference>
<dbReference type="SMART" id="SM00487">
    <property type="entry name" value="DEXDc"/>
    <property type="match status" value="1"/>
</dbReference>
<dbReference type="SMART" id="SM00490">
    <property type="entry name" value="HELICc"/>
    <property type="match status" value="1"/>
</dbReference>
<dbReference type="SUPFAM" id="SSF52540">
    <property type="entry name" value="P-loop containing nucleoside triphosphate hydrolases"/>
    <property type="match status" value="1"/>
</dbReference>
<dbReference type="PROSITE" id="PS51192">
    <property type="entry name" value="HELICASE_ATP_BIND_1"/>
    <property type="match status" value="1"/>
</dbReference>
<dbReference type="PROSITE" id="PS51194">
    <property type="entry name" value="HELICASE_CTER"/>
    <property type="match status" value="1"/>
</dbReference>
<protein>
    <recommendedName>
        <fullName evidence="12">ATP-dependent helicase HRQ1</fullName>
        <ecNumber evidence="6 8">5.6.2.4</ecNumber>
    </recommendedName>
    <alternativeName>
        <fullName evidence="11">Homologous to recQ protein 1</fullName>
    </alternativeName>
</protein>
<accession>Q05549</accession>
<accession>D6VSS0</accession>
<reference key="1">
    <citation type="journal article" date="1997" name="Nature">
        <title>The nucleotide sequence of Saccharomyces cerevisiae chromosome IV.</title>
        <authorList>
            <person name="Jacq C."/>
            <person name="Alt-Moerbe J."/>
            <person name="Andre B."/>
            <person name="Arnold W."/>
            <person name="Bahr A."/>
            <person name="Ballesta J.P.G."/>
            <person name="Bargues M."/>
            <person name="Baron L."/>
            <person name="Becker A."/>
            <person name="Biteau N."/>
            <person name="Bloecker H."/>
            <person name="Blugeon C."/>
            <person name="Boskovic J."/>
            <person name="Brandt P."/>
            <person name="Brueckner M."/>
            <person name="Buitrago M.J."/>
            <person name="Coster F."/>
            <person name="Delaveau T."/>
            <person name="del Rey F."/>
            <person name="Dujon B."/>
            <person name="Eide L.G."/>
            <person name="Garcia-Cantalejo J.M."/>
            <person name="Goffeau A."/>
            <person name="Gomez-Peris A."/>
            <person name="Granotier C."/>
            <person name="Hanemann V."/>
            <person name="Hankeln T."/>
            <person name="Hoheisel J.D."/>
            <person name="Jaeger W."/>
            <person name="Jimenez A."/>
            <person name="Jonniaux J.-L."/>
            <person name="Kraemer C."/>
            <person name="Kuester H."/>
            <person name="Laamanen P."/>
            <person name="Legros Y."/>
            <person name="Louis E.J."/>
            <person name="Moeller-Rieker S."/>
            <person name="Monnet A."/>
            <person name="Moro M."/>
            <person name="Mueller-Auer S."/>
            <person name="Nussbaumer B."/>
            <person name="Paricio N."/>
            <person name="Paulin L."/>
            <person name="Perea J."/>
            <person name="Perez-Alonso M."/>
            <person name="Perez-Ortin J.E."/>
            <person name="Pohl T.M."/>
            <person name="Prydz H."/>
            <person name="Purnelle B."/>
            <person name="Rasmussen S.W."/>
            <person name="Remacha M.A."/>
            <person name="Revuelta J.L."/>
            <person name="Rieger M."/>
            <person name="Salom D."/>
            <person name="Saluz H.P."/>
            <person name="Saiz J.E."/>
            <person name="Saren A.-M."/>
            <person name="Schaefer M."/>
            <person name="Scharfe M."/>
            <person name="Schmidt E.R."/>
            <person name="Schneider C."/>
            <person name="Scholler P."/>
            <person name="Schwarz S."/>
            <person name="Soler-Mira A."/>
            <person name="Urrestarazu L.A."/>
            <person name="Verhasselt P."/>
            <person name="Vissers S."/>
            <person name="Voet M."/>
            <person name="Volckaert G."/>
            <person name="Wagner G."/>
            <person name="Wambutt R."/>
            <person name="Wedler E."/>
            <person name="Wedler H."/>
            <person name="Woelfl S."/>
            <person name="Harris D.E."/>
            <person name="Bowman S."/>
            <person name="Brown D."/>
            <person name="Churcher C.M."/>
            <person name="Connor R."/>
            <person name="Dedman K."/>
            <person name="Gentles S."/>
            <person name="Hamlin N."/>
            <person name="Hunt S."/>
            <person name="Jones L."/>
            <person name="McDonald S."/>
            <person name="Murphy L.D."/>
            <person name="Niblett D."/>
            <person name="Odell C."/>
            <person name="Oliver K."/>
            <person name="Rajandream M.A."/>
            <person name="Richards C."/>
            <person name="Shore L."/>
            <person name="Walsh S.V."/>
            <person name="Barrell B.G."/>
            <person name="Dietrich F.S."/>
            <person name="Mulligan J.T."/>
            <person name="Allen E."/>
            <person name="Araujo R."/>
            <person name="Aviles E."/>
            <person name="Berno A."/>
            <person name="Carpenter J."/>
            <person name="Chen E."/>
            <person name="Cherry J.M."/>
            <person name="Chung E."/>
            <person name="Duncan M."/>
            <person name="Hunicke-Smith S."/>
            <person name="Hyman R.W."/>
            <person name="Komp C."/>
            <person name="Lashkari D."/>
            <person name="Lew H."/>
            <person name="Lin D."/>
            <person name="Mosedale D."/>
            <person name="Nakahara K."/>
            <person name="Namath A."/>
            <person name="Oefner P."/>
            <person name="Oh C."/>
            <person name="Petel F.X."/>
            <person name="Roberts D."/>
            <person name="Schramm S."/>
            <person name="Schroeder M."/>
            <person name="Shogren T."/>
            <person name="Shroff N."/>
            <person name="Winant A."/>
            <person name="Yelton M.A."/>
            <person name="Botstein D."/>
            <person name="Davis R.W."/>
            <person name="Johnston M."/>
            <person name="Andrews S."/>
            <person name="Brinkman R."/>
            <person name="Cooper J."/>
            <person name="Ding H."/>
            <person name="Du Z."/>
            <person name="Favello A."/>
            <person name="Fulton L."/>
            <person name="Gattung S."/>
            <person name="Greco T."/>
            <person name="Hallsworth K."/>
            <person name="Hawkins J."/>
            <person name="Hillier L.W."/>
            <person name="Jier M."/>
            <person name="Johnson D."/>
            <person name="Johnston L."/>
            <person name="Kirsten J."/>
            <person name="Kucaba T."/>
            <person name="Langston Y."/>
            <person name="Latreille P."/>
            <person name="Le T."/>
            <person name="Mardis E."/>
            <person name="Menezes S."/>
            <person name="Miller N."/>
            <person name="Nhan M."/>
            <person name="Pauley A."/>
            <person name="Peluso D."/>
            <person name="Rifkin L."/>
            <person name="Riles L."/>
            <person name="Taich A."/>
            <person name="Trevaskis E."/>
            <person name="Vignati D."/>
            <person name="Wilcox L."/>
            <person name="Wohldman P."/>
            <person name="Vaudin M."/>
            <person name="Wilson R."/>
            <person name="Waterston R."/>
            <person name="Albermann K."/>
            <person name="Hani J."/>
            <person name="Heumann K."/>
            <person name="Kleine K."/>
            <person name="Mewes H.-W."/>
            <person name="Zollner A."/>
            <person name="Zaccaria P."/>
        </authorList>
    </citation>
    <scope>NUCLEOTIDE SEQUENCE [LARGE SCALE GENOMIC DNA]</scope>
    <source>
        <strain>ATCC 204508 / S288c</strain>
    </source>
</reference>
<reference key="2">
    <citation type="journal article" date="2014" name="G3 (Bethesda)">
        <title>The reference genome sequence of Saccharomyces cerevisiae: Then and now.</title>
        <authorList>
            <person name="Engel S.R."/>
            <person name="Dietrich F.S."/>
            <person name="Fisk D.G."/>
            <person name="Binkley G."/>
            <person name="Balakrishnan R."/>
            <person name="Costanzo M.C."/>
            <person name="Dwight S.S."/>
            <person name="Hitz B.C."/>
            <person name="Karra K."/>
            <person name="Nash R.S."/>
            <person name="Weng S."/>
            <person name="Wong E.D."/>
            <person name="Lloyd P."/>
            <person name="Skrzypek M.S."/>
            <person name="Miyasato S.R."/>
            <person name="Simison M."/>
            <person name="Cherry J.M."/>
        </authorList>
    </citation>
    <scope>GENOME REANNOTATION</scope>
    <source>
        <strain>ATCC 204508 / S288c</strain>
    </source>
</reference>
<reference key="3">
    <citation type="journal article" date="1999" name="Yeast">
        <title>Systematic identification, classification, and characterization of the open reading frames which encode novel helicase-related proteins in Saccharomyces cerevisiae by gene disruption and Northern analysis.</title>
        <authorList>
            <person name="Shiratori A."/>
            <person name="Shibata T."/>
            <person name="Arisawa M."/>
            <person name="Hanaoka F."/>
            <person name="Murakami Y."/>
            <person name="Eki T."/>
        </authorList>
    </citation>
    <scope>INDUCTION</scope>
</reference>
<reference key="4">
    <citation type="journal article" date="2003" name="Nature">
        <title>Global analysis of protein localization in budding yeast.</title>
        <authorList>
            <person name="Huh W.-K."/>
            <person name="Falvo J.V."/>
            <person name="Gerke L.C."/>
            <person name="Carroll A.S."/>
            <person name="Howson R.W."/>
            <person name="Weissman J.S."/>
            <person name="O'Shea E.K."/>
        </authorList>
    </citation>
    <scope>SUBCELLULAR LOCATION [LARGE SCALE ANALYSIS]</scope>
</reference>
<reference key="5">
    <citation type="journal article" date="2003" name="Nature">
        <title>Global analysis of protein expression in yeast.</title>
        <authorList>
            <person name="Ghaemmaghami S."/>
            <person name="Huh W.-K."/>
            <person name="Bower K."/>
            <person name="Howson R.W."/>
            <person name="Belle A."/>
            <person name="Dephoure N."/>
            <person name="O'Shea E.K."/>
            <person name="Weissman J.S."/>
        </authorList>
    </citation>
    <scope>LEVEL OF PROTEIN EXPRESSION [LARGE SCALE ANALYSIS]</scope>
</reference>
<reference key="6">
    <citation type="journal article" date="2008" name="Comput. Biol. Chem.">
        <title>In silico analyses of a new group of fungal and plant RecQ4-homologous proteins.</title>
        <authorList>
            <person name="Barea F."/>
            <person name="Tessaro S."/>
            <person name="Bonatto D."/>
        </authorList>
    </citation>
    <scope>IDENTIFICATION</scope>
</reference>
<reference key="7">
    <citation type="journal article" date="2012" name="Biochem. Biophys. Res. Commun.">
        <title>Saccharomyces cerevisiae Hrq1 requires a long 3'-tailed DNA substrate for helicase activity.</title>
        <authorList>
            <person name="Kwon S.H."/>
            <person name="Choi D.H."/>
            <person name="Lee R."/>
            <person name="Bae S.H."/>
        </authorList>
    </citation>
    <scope>FUNCTION</scope>
    <scope>CATALYTIC ACTIVITY</scope>
    <scope>BIOPHYSICOCHEMICAL PROPERTIES</scope>
    <scope>COFACTOR</scope>
    <scope>MUTAGENESIS OF LYS-318</scope>
</reference>
<reference key="8">
    <citation type="journal article" date="2013" name="J. Microbiol.">
        <title>Hrq1 functions independently of Sgs1 to preserve genome integrity in Saccharomyces cerevisiae.</title>
        <authorList>
            <person name="Choi D.H."/>
            <person name="Lee R."/>
            <person name="Kwon S.H."/>
            <person name="Bae S.H."/>
        </authorList>
    </citation>
    <scope>FUNCTION</scope>
    <scope>DISRUPTION PHENOTYPE</scope>
</reference>
<reference key="9">
    <citation type="journal article" date="2014" name="Cell Rep.">
        <title>Hrq1, a homolog of the human RecQ4 helicase, acts catalytically and structurally to promote genome integrity.</title>
        <authorList>
            <person name="Bochman M.L."/>
            <person name="Paeschke K."/>
            <person name="Chan A."/>
            <person name="Zakian V.A."/>
        </authorList>
    </citation>
    <scope>DISRUPTION PHENOTYPE</scope>
    <scope>FUNCTION</scope>
    <scope>CATALYTIC ACTIVITY</scope>
    <scope>DNA-BINDING</scope>
    <scope>SUBUNIT</scope>
</reference>
<reference key="10">
    <citation type="journal article" date="2014" name="G3 (Bethesda)">
        <title>Conditional genetic interactions of RTT107, SLX4, and HRQ1 reveal dynamic networks upon DNA damage in S. cerevisiae.</title>
        <authorList>
            <person name="Leung G.P."/>
            <person name="Aristizabal M.J."/>
            <person name="Krogan N.J."/>
            <person name="Kobor M.S."/>
        </authorList>
    </citation>
    <scope>FUNCTION</scope>
</reference>
<reference key="11">
    <citation type="journal article" date="2014" name="J. Microbiol.">
        <title>Hrq1 facilitates nucleotide excision repair of DNA damage induced by 4-nitroquinoline-1-oxide and cisplatin in Saccharomyces cerevisiae.</title>
        <authorList>
            <person name="Choi D.H."/>
            <person name="Min M.H."/>
            <person name="Kim M.J."/>
            <person name="Lee R."/>
            <person name="Kwon S.H."/>
            <person name="Bae S.H."/>
        </authorList>
    </citation>
    <scope>FUNCTION</scope>
    <scope>INTERACTION WITH RAD4</scope>
    <scope>MUTAGENESIS OF LYS-318</scope>
</reference>
<name>HRQ1_YEAST</name>
<organism>
    <name type="scientific">Saccharomyces cerevisiae (strain ATCC 204508 / S288c)</name>
    <name type="common">Baker's yeast</name>
    <dbReference type="NCBI Taxonomy" id="559292"/>
    <lineage>
        <taxon>Eukaryota</taxon>
        <taxon>Fungi</taxon>
        <taxon>Dikarya</taxon>
        <taxon>Ascomycota</taxon>
        <taxon>Saccharomycotina</taxon>
        <taxon>Saccharomycetes</taxon>
        <taxon>Saccharomycetales</taxon>
        <taxon>Saccharomycetaceae</taxon>
        <taxon>Saccharomyces</taxon>
    </lineage>
</organism>
<sequence length="1077" mass="123550">MEEGPIKKKLKSAGQGSGKTDAFRNFEQFFFRLNTLYTFLICRKHVVPTFKTLCGPIETALKRTVTKEDLAMVMALMPRECVFKYIDENQIYTETKIFDFNNGGFQQKENDIFELKDVDDQNQTQKSTQLLIFEFIDGTMQRSWSASDRFSQIKIPTYTTEEMKKMISKREALFKSRLREFILEKEKANLDPFSELTNLAQKYIPRERDYEDPIEAMMKAKQESNEMSIPNYSNNSVITTIPQMIEKLKSTEFYASQIKHCFTIPSRTAKYKGLCFELAPEVYQGMEHENFYSHQADAINSLHQGENVIITTSTSSGKSLIYQLAAIDLLLKDPESTFMYIFPTKALAQDQKRAFKVILSKIPELKNAVVDTYDGDTEPEERAYIRKNARVIFTNPDMIHTSILPNHANWRHFLYHLKLVVVDELHIYKGLFGSHVALVMRRLLRLCHCFYENSGLQFISCSATLKSPVQHMKDMFGINEVTLIHEDGSPTGAKHLVVWNPPILPQHERKRENFIRESAKILVQLILNNVRTIAFCYVRRVCELLMKEVRNIFIETGREDLVTEVMSYRGGYSASDRRKIEREMFHGNLKAVISTNALELGIDIGGLDAVLMCGFPLSMANFHQQSGRAGRRNNDSLTLVVASDSPVDQHYVAHPESLLEVNNFESYQDLVLDFNNILILEGHIQCAAFELPINFERDKQYFTESHLRKICVERLHHNQDGYHASNRFLPWPSKCVSLRGGEEDQFAVVDITNGRNIIIEEIEASRTSFTLYDGGIFIHQGYPYLVKEFNPDERYAKVQRVDVDWVTNQRDFTDVDPQEIELIRSLRNSDVPVYFGKIKTTIIVFGFFKVDKYKRIIDAIETHNPPVIINSKGLWIDMPKYALEICQKKQLNVAGAIHGAQHAIMGMLPRFIVAGVDEIQTECKAPEKEFAERQTKRKRPARLIFYDSKGGKYGSGLCVKAFEHIDDIIESSLRRIEECPCSDGCPDCVAASFCKENSLVLSKPGAQVVLHCILGHSEDSFIDLIKDGPEPNMPEIKVETVIPVSEHVNFSDDFKIIDVRRATKDDTHTNEIIKKEI</sequence>
<feature type="chain" id="PRO_0000253813" description="ATP-dependent helicase HRQ1">
    <location>
        <begin position="1"/>
        <end position="1077"/>
    </location>
</feature>
<feature type="domain" description="Helicase ATP-binding" evidence="1">
    <location>
        <begin position="299"/>
        <end position="483"/>
    </location>
</feature>
<feature type="domain" description="Helicase C-terminal" evidence="2">
    <location>
        <begin position="521"/>
        <end position="678"/>
    </location>
</feature>
<feature type="short sequence motif" description="DEAH box">
    <location>
        <begin position="423"/>
        <end position="426"/>
    </location>
</feature>
<feature type="binding site" evidence="1">
    <location>
        <begin position="312"/>
        <end position="319"/>
    </location>
    <ligand>
        <name>ATP</name>
        <dbReference type="ChEBI" id="CHEBI:30616"/>
    </ligand>
</feature>
<feature type="mutagenesis site" description="Impairs helicase and ATPase activities." evidence="6 9">
    <original>K</original>
    <variation>A</variation>
    <location>
        <position position="318"/>
    </location>
</feature>
<gene>
    <name evidence="11" type="primary">HRQ1</name>
    <name evidence="13" type="ordered locus">YDR291W</name>
</gene>
<proteinExistence type="evidence at protein level"/>
<keyword id="KW-0067">ATP-binding</keyword>
<keyword id="KW-0227">DNA damage</keyword>
<keyword id="KW-0234">DNA repair</keyword>
<keyword id="KW-0238">DNA-binding</keyword>
<keyword id="KW-0347">Helicase</keyword>
<keyword id="KW-0378">Hydrolase</keyword>
<keyword id="KW-0413">Isomerase</keyword>
<keyword id="KW-0547">Nucleotide-binding</keyword>
<keyword id="KW-0539">Nucleus</keyword>
<keyword id="KW-1185">Reference proteome</keyword>
<keyword id="KW-0346">Stress response</keyword>
<comment type="function">
    <text evidence="6 7 8 9 10">Helicase with 3'-5' helicase activity involved in genome stability (PubMed:23456718, PubMed:24440721, PubMed:24700328). Functions in the RAD4-dependent nucleotide excision repair (NER) pathway and plays a critical role in DNA interstrand cross-link repair (PubMed:24440721, PubMed:24682993). Unwinds relatively long duplex DNA up to 120-bp and requires a long 3'-tail of at least 70 nucleotides for efficient unwinding of duplex DNA (PubMed:23026052). Activity is significantly stimulated by a preexisting fork structure (PubMed:24682993). Shows both processive helicase and DNA strand annealing activities (PubMed:24682993). Affects telomere length by a non-catalytic mechanism, probably through inhibiting telomerase by competing with it for ssDNA binding (PubMed:24440721).</text>
</comment>
<comment type="catalytic activity">
    <reaction evidence="6 8">
        <text>Couples ATP hydrolysis with the unwinding of duplex DNA by translocating in the 3'-5' direction.</text>
        <dbReference type="EC" id="5.6.2.4"/>
    </reaction>
</comment>
<comment type="catalytic activity">
    <reaction evidence="6">
        <text>ATP + H2O = ADP + phosphate + H(+)</text>
        <dbReference type="Rhea" id="RHEA:13065"/>
        <dbReference type="ChEBI" id="CHEBI:15377"/>
        <dbReference type="ChEBI" id="CHEBI:15378"/>
        <dbReference type="ChEBI" id="CHEBI:30616"/>
        <dbReference type="ChEBI" id="CHEBI:43474"/>
        <dbReference type="ChEBI" id="CHEBI:456216"/>
        <dbReference type="EC" id="5.6.2.4"/>
    </reaction>
</comment>
<comment type="cofactor">
    <cofactor evidence="6">
        <name>Mg(2+)</name>
        <dbReference type="ChEBI" id="CHEBI:18420"/>
    </cofactor>
</comment>
<comment type="biophysicochemical properties">
    <phDependence>
        <text evidence="6">Optimum pH is 6.0-8.0.</text>
    </phDependence>
</comment>
<comment type="subunit">
    <text evidence="8 9">Forms heptamer rings (PubMed:24440721). Interacts with RAD4 (PubMed:24682993).</text>
</comment>
<comment type="subcellular location">
    <subcellularLocation>
        <location evidence="4">Nucleus</location>
    </subcellularLocation>
</comment>
<comment type="induction">
    <text evidence="3">By heat shock.</text>
</comment>
<comment type="disruption phenotype">
    <text evidence="7 8">Leads to increased mitotic recombination and spontaneous mutation, as well as to sensitivity to 4-nitroquinoline 1-oxide and cisplatin (PubMed:23456718). Also causes hypersensitivity to DNA interstrand cross-links (ICLs) and telomere addition to DNA breaks (PubMed:24440721).</text>
</comment>
<comment type="miscellaneous">
    <text evidence="5">Present with 259 molecules/cell in log phase SD medium.</text>
</comment>
<comment type="similarity">
    <text evidence="12">Belongs to the helicase family. HRQ1 subfamily.</text>
</comment>